<reference key="1">
    <citation type="journal article" date="2000" name="Nature">
        <title>Complete genome sequence of Pseudomonas aeruginosa PAO1, an opportunistic pathogen.</title>
        <authorList>
            <person name="Stover C.K."/>
            <person name="Pham X.-Q.T."/>
            <person name="Erwin A.L."/>
            <person name="Mizoguchi S.D."/>
            <person name="Warrener P."/>
            <person name="Hickey M.J."/>
            <person name="Brinkman F.S.L."/>
            <person name="Hufnagle W.O."/>
            <person name="Kowalik D.J."/>
            <person name="Lagrou M."/>
            <person name="Garber R.L."/>
            <person name="Goltry L."/>
            <person name="Tolentino E."/>
            <person name="Westbrock-Wadman S."/>
            <person name="Yuan Y."/>
            <person name="Brody L.L."/>
            <person name="Coulter S.N."/>
            <person name="Folger K.R."/>
            <person name="Kas A."/>
            <person name="Larbig K."/>
            <person name="Lim R.M."/>
            <person name="Smith K.A."/>
            <person name="Spencer D.H."/>
            <person name="Wong G.K.-S."/>
            <person name="Wu Z."/>
            <person name="Paulsen I.T."/>
            <person name="Reizer J."/>
            <person name="Saier M.H. Jr."/>
            <person name="Hancock R.E.W."/>
            <person name="Lory S."/>
            <person name="Olson M.V."/>
        </authorList>
    </citation>
    <scope>NUCLEOTIDE SEQUENCE [LARGE SCALE GENOMIC DNA]</scope>
    <source>
        <strain>ATCC 15692 / DSM 22644 / CIP 104116 / JCM 14847 / LMG 12228 / 1C / PRS 101 / PAO1</strain>
    </source>
</reference>
<reference key="2">
    <citation type="journal article" date="2011" name="J. Bacteriol.">
        <title>Identification of C(4)-dicarboxylate transport systems in Pseudomonas aeruginosa PAO1.</title>
        <authorList>
            <person name="Valentini M."/>
            <person name="Storelli N."/>
            <person name="Lapouge K."/>
        </authorList>
    </citation>
    <scope>FUNCTION</scope>
    <scope>SUBUNIT</scope>
    <scope>INDUCTION</scope>
    <scope>DISRUPTION PHENOTYPE</scope>
    <source>
        <strain>ATCC 15692 / DSM 22644 / CIP 104116 / JCM 14847 / LMG 12228 / 1C / PRS 101 / PAO1</strain>
    </source>
</reference>
<sequence>MLKHTAKALVCALSLTVAGIVQAADPIVIKFSHVVAEHTPKGQGALLFKKLVEERLPGKVKVEVYPNSSLFGDGKEMEALLLGDVQIIAPSLAKFEQYTKKLQIFDLPFLFDNIQAVDRFQQSPQGKELLTSMQDKGITGLGYWHNGMKQLSANKPLREPKDARGLKFRVQASKVLEEQFKAVRANPRKMSFAEVYQGLQTGVVNGTENPWSNIYSQKMHEVQKYITESDHGVLDYMVITNTKFWNGLPEDVRGVLAKTMDEVTVEVNKQAEALNQGDKQRIVEAKTSEIIELTPEQRAEWRKAMQPVWKKFEGEIGADLIKAAEAANQAQ</sequence>
<gene>
    <name evidence="4" type="primary">dctP</name>
    <name evidence="7" type="ordered locus">PA5167</name>
</gene>
<dbReference type="EMBL" id="AE004091">
    <property type="protein sequence ID" value="AAG08552.1"/>
    <property type="molecule type" value="Genomic_DNA"/>
</dbReference>
<dbReference type="PIR" id="H83000">
    <property type="entry name" value="H83000"/>
</dbReference>
<dbReference type="RefSeq" id="NP_253854.1">
    <property type="nucleotide sequence ID" value="NC_002516.2"/>
</dbReference>
<dbReference type="RefSeq" id="WP_003105525.1">
    <property type="nucleotide sequence ID" value="NZ_QZGE01000002.1"/>
</dbReference>
<dbReference type="PDB" id="9DSY">
    <property type="method" value="X-ray"/>
    <property type="resolution" value="1.35 A"/>
    <property type="chains" value="A=23-331"/>
</dbReference>
<dbReference type="PDBsum" id="9DSY"/>
<dbReference type="SMR" id="Q9HU18"/>
<dbReference type="STRING" id="208964.PA5167"/>
<dbReference type="PaxDb" id="208964-PA5167"/>
<dbReference type="DNASU" id="879964"/>
<dbReference type="GeneID" id="879964"/>
<dbReference type="KEGG" id="pae:PA5167"/>
<dbReference type="PATRIC" id="fig|208964.12.peg.5415"/>
<dbReference type="PseudoCAP" id="PA5167"/>
<dbReference type="HOGENOM" id="CLU_036176_1_3_6"/>
<dbReference type="InParanoid" id="Q9HU18"/>
<dbReference type="OrthoDB" id="9771186at2"/>
<dbReference type="PhylomeDB" id="Q9HU18"/>
<dbReference type="BioCyc" id="PAER208964:G1FZ6-5284-MONOMER"/>
<dbReference type="Proteomes" id="UP000002438">
    <property type="component" value="Chromosome"/>
</dbReference>
<dbReference type="GO" id="GO:0030288">
    <property type="term" value="C:outer membrane-bounded periplasmic space"/>
    <property type="evidence" value="ECO:0007669"/>
    <property type="project" value="InterPro"/>
</dbReference>
<dbReference type="GO" id="GO:0015740">
    <property type="term" value="P:C4-dicarboxylate transport"/>
    <property type="evidence" value="ECO:0000315"/>
    <property type="project" value="PseudoCAP"/>
</dbReference>
<dbReference type="GO" id="GO:0055085">
    <property type="term" value="P:transmembrane transport"/>
    <property type="evidence" value="ECO:0007669"/>
    <property type="project" value="InterPro"/>
</dbReference>
<dbReference type="CDD" id="cd13674">
    <property type="entry name" value="PBP2_TRAP_SBP_like_1"/>
    <property type="match status" value="1"/>
</dbReference>
<dbReference type="FunFam" id="3.40.190.170:FF:000001">
    <property type="entry name" value="TRAP dicarboxylate transporter, DctP subunit"/>
    <property type="match status" value="1"/>
</dbReference>
<dbReference type="Gene3D" id="3.40.190.170">
    <property type="entry name" value="Bacterial extracellular solute-binding protein, family 7"/>
    <property type="match status" value="1"/>
</dbReference>
<dbReference type="InterPro" id="IPR018389">
    <property type="entry name" value="DctP_fam"/>
</dbReference>
<dbReference type="InterPro" id="IPR004682">
    <property type="entry name" value="TRAP_DctP"/>
</dbReference>
<dbReference type="InterPro" id="IPR038404">
    <property type="entry name" value="TRAP_DctP_sf"/>
</dbReference>
<dbReference type="NCBIfam" id="TIGR00787">
    <property type="entry name" value="dctP"/>
    <property type="match status" value="1"/>
</dbReference>
<dbReference type="NCBIfam" id="NF037995">
    <property type="entry name" value="TRAP_S1"/>
    <property type="match status" value="1"/>
</dbReference>
<dbReference type="PANTHER" id="PTHR33376">
    <property type="match status" value="1"/>
</dbReference>
<dbReference type="PANTHER" id="PTHR33376:SF7">
    <property type="entry name" value="C4-DICARBOXYLATE-BINDING PROTEIN DCTB"/>
    <property type="match status" value="1"/>
</dbReference>
<dbReference type="Pfam" id="PF03480">
    <property type="entry name" value="DctP"/>
    <property type="match status" value="1"/>
</dbReference>
<dbReference type="PIRSF" id="PIRSF006470">
    <property type="entry name" value="DctB"/>
    <property type="match status" value="1"/>
</dbReference>
<accession>Q9HU18</accession>
<name>DCTP_PSEAE</name>
<keyword id="KW-0002">3D-structure</keyword>
<keyword id="KW-0574">Periplasm</keyword>
<keyword id="KW-1185">Reference proteome</keyword>
<keyword id="KW-0732">Signal</keyword>
<keyword id="KW-0813">Transport</keyword>
<evidence type="ECO:0000250" key="1">
    <source>
        <dbReference type="UniProtKB" id="P37735"/>
    </source>
</evidence>
<evidence type="ECO:0000255" key="2"/>
<evidence type="ECO:0000269" key="3">
    <source>
    </source>
</evidence>
<evidence type="ECO:0000303" key="4">
    <source>
    </source>
</evidence>
<evidence type="ECO:0000305" key="5"/>
<evidence type="ECO:0000305" key="6">
    <source>
    </source>
</evidence>
<evidence type="ECO:0000312" key="7">
    <source>
        <dbReference type="EMBL" id="AAG08552.1"/>
    </source>
</evidence>
<feature type="signal peptide" evidence="2">
    <location>
        <begin position="1"/>
        <end position="23"/>
    </location>
</feature>
<feature type="chain" id="PRO_5004326794" description="C4-dicarboxylate-binding periplasmic protein DctP">
    <location>
        <begin position="24"/>
        <end position="331"/>
    </location>
</feature>
<proteinExistence type="evidence at protein level"/>
<protein>
    <recommendedName>
        <fullName evidence="5">C4-dicarboxylate-binding periplasmic protein DctP</fullName>
    </recommendedName>
</protein>
<organism>
    <name type="scientific">Pseudomonas aeruginosa (strain ATCC 15692 / DSM 22644 / CIP 104116 / JCM 14847 / LMG 12228 / 1C / PRS 101 / PAO1)</name>
    <dbReference type="NCBI Taxonomy" id="208964"/>
    <lineage>
        <taxon>Bacteria</taxon>
        <taxon>Pseudomonadati</taxon>
        <taxon>Pseudomonadota</taxon>
        <taxon>Gammaproteobacteria</taxon>
        <taxon>Pseudomonadales</taxon>
        <taxon>Pseudomonadaceae</taxon>
        <taxon>Pseudomonas</taxon>
    </lineage>
</organism>
<comment type="function">
    <text evidence="3">Part of the tripartite ATP-independent periplasmic (TRAP) transport system DctPQM involved in C4-dicarboxylates uptake.</text>
</comment>
<comment type="subunit">
    <text evidence="6">The complex comprises the extracytoplasmic solute receptor protein DctP, and the two transmembrane proteins DctQ and DctM.</text>
</comment>
<comment type="subcellular location">
    <subcellularLocation>
        <location evidence="1">Periplasm</location>
    </subcellularLocation>
</comment>
<comment type="induction">
    <text evidence="3">Expression is maximal in early exponential growth phase and declines with cell density to reach a plateau in the stationary growth phase. Induced by the C(4)-dicarboxylates succinate, fumarate and malate. Positively regulated by RpoN and the DctB/DctD two-component system. Negatively regulated by DctA.</text>
</comment>
<comment type="disruption phenotype">
    <text evidence="3">The dctA-dctPQM double mutant shows no growth on malate and fumarate and residual growth on succinate.</text>
</comment>
<comment type="miscellaneous">
    <text evidence="3">The DctPQM carrier is more efficient than the DctA carrier for the utilization of succinate at micromolar concentrations, whereas DctA is the major transporter at millimolar concentrations.</text>
</comment>
<comment type="similarity">
    <text evidence="5">Belongs to the bacterial solute-binding protein 7 family.</text>
</comment>